<keyword id="KW-0037">Angiogenesis</keyword>
<keyword id="KW-0053">Apoptosis</keyword>
<keyword id="KW-1003">Cell membrane</keyword>
<keyword id="KW-0963">Cytoplasm</keyword>
<keyword id="KW-0333">Golgi apparatus</keyword>
<keyword id="KW-0472">Membrane</keyword>
<keyword id="KW-1185">Reference proteome</keyword>
<reference key="1">
    <citation type="journal article" date="2013" name="Nature">
        <title>The zebrafish reference genome sequence and its relationship to the human genome.</title>
        <authorList>
            <person name="Howe K."/>
            <person name="Clark M.D."/>
            <person name="Torroja C.F."/>
            <person name="Torrance J."/>
            <person name="Berthelot C."/>
            <person name="Muffato M."/>
            <person name="Collins J.E."/>
            <person name="Humphray S."/>
            <person name="McLaren K."/>
            <person name="Matthews L."/>
            <person name="McLaren S."/>
            <person name="Sealy I."/>
            <person name="Caccamo M."/>
            <person name="Churcher C."/>
            <person name="Scott C."/>
            <person name="Barrett J.C."/>
            <person name="Koch R."/>
            <person name="Rauch G.J."/>
            <person name="White S."/>
            <person name="Chow W."/>
            <person name="Kilian B."/>
            <person name="Quintais L.T."/>
            <person name="Guerra-Assuncao J.A."/>
            <person name="Zhou Y."/>
            <person name="Gu Y."/>
            <person name="Yen J."/>
            <person name="Vogel J.H."/>
            <person name="Eyre T."/>
            <person name="Redmond S."/>
            <person name="Banerjee R."/>
            <person name="Chi J."/>
            <person name="Fu B."/>
            <person name="Langley E."/>
            <person name="Maguire S.F."/>
            <person name="Laird G.K."/>
            <person name="Lloyd D."/>
            <person name="Kenyon E."/>
            <person name="Donaldson S."/>
            <person name="Sehra H."/>
            <person name="Almeida-King J."/>
            <person name="Loveland J."/>
            <person name="Trevanion S."/>
            <person name="Jones M."/>
            <person name="Quail M."/>
            <person name="Willey D."/>
            <person name="Hunt A."/>
            <person name="Burton J."/>
            <person name="Sims S."/>
            <person name="McLay K."/>
            <person name="Plumb B."/>
            <person name="Davis J."/>
            <person name="Clee C."/>
            <person name="Oliver K."/>
            <person name="Clark R."/>
            <person name="Riddle C."/>
            <person name="Elliot D."/>
            <person name="Threadgold G."/>
            <person name="Harden G."/>
            <person name="Ware D."/>
            <person name="Begum S."/>
            <person name="Mortimore B."/>
            <person name="Kerry G."/>
            <person name="Heath P."/>
            <person name="Phillimore B."/>
            <person name="Tracey A."/>
            <person name="Corby N."/>
            <person name="Dunn M."/>
            <person name="Johnson C."/>
            <person name="Wood J."/>
            <person name="Clark S."/>
            <person name="Pelan S."/>
            <person name="Griffiths G."/>
            <person name="Smith M."/>
            <person name="Glithero R."/>
            <person name="Howden P."/>
            <person name="Barker N."/>
            <person name="Lloyd C."/>
            <person name="Stevens C."/>
            <person name="Harley J."/>
            <person name="Holt K."/>
            <person name="Panagiotidis G."/>
            <person name="Lovell J."/>
            <person name="Beasley H."/>
            <person name="Henderson C."/>
            <person name="Gordon D."/>
            <person name="Auger K."/>
            <person name="Wright D."/>
            <person name="Collins J."/>
            <person name="Raisen C."/>
            <person name="Dyer L."/>
            <person name="Leung K."/>
            <person name="Robertson L."/>
            <person name="Ambridge K."/>
            <person name="Leongamornlert D."/>
            <person name="McGuire S."/>
            <person name="Gilderthorp R."/>
            <person name="Griffiths C."/>
            <person name="Manthravadi D."/>
            <person name="Nichol S."/>
            <person name="Barker G."/>
            <person name="Whitehead S."/>
            <person name="Kay M."/>
            <person name="Brown J."/>
            <person name="Murnane C."/>
            <person name="Gray E."/>
            <person name="Humphries M."/>
            <person name="Sycamore N."/>
            <person name="Barker D."/>
            <person name="Saunders D."/>
            <person name="Wallis J."/>
            <person name="Babbage A."/>
            <person name="Hammond S."/>
            <person name="Mashreghi-Mohammadi M."/>
            <person name="Barr L."/>
            <person name="Martin S."/>
            <person name="Wray P."/>
            <person name="Ellington A."/>
            <person name="Matthews N."/>
            <person name="Ellwood M."/>
            <person name="Woodmansey R."/>
            <person name="Clark G."/>
            <person name="Cooper J."/>
            <person name="Tromans A."/>
            <person name="Grafham D."/>
            <person name="Skuce C."/>
            <person name="Pandian R."/>
            <person name="Andrews R."/>
            <person name="Harrison E."/>
            <person name="Kimberley A."/>
            <person name="Garnett J."/>
            <person name="Fosker N."/>
            <person name="Hall R."/>
            <person name="Garner P."/>
            <person name="Kelly D."/>
            <person name="Bird C."/>
            <person name="Palmer S."/>
            <person name="Gehring I."/>
            <person name="Berger A."/>
            <person name="Dooley C.M."/>
            <person name="Ersan-Urun Z."/>
            <person name="Eser C."/>
            <person name="Geiger H."/>
            <person name="Geisler M."/>
            <person name="Karotki L."/>
            <person name="Kirn A."/>
            <person name="Konantz J."/>
            <person name="Konantz M."/>
            <person name="Oberlander M."/>
            <person name="Rudolph-Geiger S."/>
            <person name="Teucke M."/>
            <person name="Lanz C."/>
            <person name="Raddatz G."/>
            <person name="Osoegawa K."/>
            <person name="Zhu B."/>
            <person name="Rapp A."/>
            <person name="Widaa S."/>
            <person name="Langford C."/>
            <person name="Yang F."/>
            <person name="Schuster S.C."/>
            <person name="Carter N.P."/>
            <person name="Harrow J."/>
            <person name="Ning Z."/>
            <person name="Herrero J."/>
            <person name="Searle S.M."/>
            <person name="Enright A."/>
            <person name="Geisler R."/>
            <person name="Plasterk R.H."/>
            <person name="Lee C."/>
            <person name="Westerfield M."/>
            <person name="de Jong P.J."/>
            <person name="Zon L.I."/>
            <person name="Postlethwait J.H."/>
            <person name="Nusslein-Volhard C."/>
            <person name="Hubbard T.J."/>
            <person name="Roest Crollius H."/>
            <person name="Rogers J."/>
            <person name="Stemple D.L."/>
        </authorList>
    </citation>
    <scope>NUCLEOTIDE SEQUENCE [LARGE SCALE GENOMIC DNA]</scope>
    <source>
        <strain>Tuebingen</strain>
    </source>
</reference>
<reference key="2">
    <citation type="submission" date="2003-08" db="EMBL/GenBank/DDBJ databases">
        <authorList>
            <consortium name="NIH - Zebrafish Gene Collection (ZGC) project"/>
        </authorList>
    </citation>
    <scope>NUCLEOTIDE SEQUENCE [LARGE SCALE MRNA]</scope>
    <source>
        <tissue>Kidney</tissue>
    </source>
</reference>
<reference key="3">
    <citation type="journal article" date="2009" name="Hum. Mutat.">
        <title>Functional analyses of human and zebrafish 18-amino acid in-frame deletion pave the way for domain mapping of the cerebral cavernous malformation 3 protein.</title>
        <authorList>
            <person name="Voss K."/>
            <person name="Stahl S."/>
            <person name="Hogan B.M."/>
            <person name="Reinders J."/>
            <person name="Schleider E."/>
            <person name="Schulte-Merker S."/>
            <person name="Felbor U."/>
        </authorList>
    </citation>
    <scope>INTERACTION WITH CCM2; STK25 AND STK26</scope>
    <scope>FUNCTION</scope>
</reference>
<feature type="chain" id="PRO_0000187566" description="Programmed cell death protein 10-A">
    <location>
        <begin position="1"/>
        <end position="210"/>
    </location>
</feature>
<dbReference type="EMBL" id="AL845366">
    <property type="status" value="NOT_ANNOTATED_CDS"/>
    <property type="molecule type" value="Genomic_DNA"/>
</dbReference>
<dbReference type="EMBL" id="BC056552">
    <property type="protein sequence ID" value="AAH56552.1"/>
    <property type="status" value="ALT_INIT"/>
    <property type="molecule type" value="mRNA"/>
</dbReference>
<dbReference type="RefSeq" id="NP_956849.2">
    <property type="nucleotide sequence ID" value="NM_200555.2"/>
</dbReference>
<dbReference type="RefSeq" id="XP_005159037.1">
    <property type="nucleotide sequence ID" value="XM_005158980.3"/>
</dbReference>
<dbReference type="SMR" id="Q6PHH3"/>
<dbReference type="FunCoup" id="Q6PHH3">
    <property type="interactions" value="2252"/>
</dbReference>
<dbReference type="STRING" id="7955.ENSDARP00000156496"/>
<dbReference type="PaxDb" id="7955-ENSDARP00000046901"/>
<dbReference type="Ensembl" id="ENSDART00000046902">
    <property type="protein sequence ID" value="ENSDARP00000046901"/>
    <property type="gene ID" value="ENSDARG00000035054"/>
</dbReference>
<dbReference type="Ensembl" id="ENSDART00000188091">
    <property type="protein sequence ID" value="ENSDARP00000156496"/>
    <property type="gene ID" value="ENSDARG00000035054"/>
</dbReference>
<dbReference type="Ensembl" id="ENSDART00000190699">
    <property type="protein sequence ID" value="ENSDARP00000150771"/>
    <property type="gene ID" value="ENSDARG00000109378"/>
</dbReference>
<dbReference type="GeneID" id="393527"/>
<dbReference type="KEGG" id="dre:393527"/>
<dbReference type="AGR" id="ZFIN:ZDB-GENE-040426-1432"/>
<dbReference type="CTD" id="393527"/>
<dbReference type="ZFIN" id="ZDB-GENE-040426-1432">
    <property type="gene designation" value="pdcd10a"/>
</dbReference>
<dbReference type="eggNOG" id="KOG4025">
    <property type="taxonomic scope" value="Eukaryota"/>
</dbReference>
<dbReference type="HOGENOM" id="CLU_083906_1_0_1"/>
<dbReference type="InParanoid" id="Q6PHH3"/>
<dbReference type="OMA" id="NDAVGFE"/>
<dbReference type="OrthoDB" id="6017654at2759"/>
<dbReference type="PhylomeDB" id="Q6PHH3"/>
<dbReference type="TreeFam" id="TF105802"/>
<dbReference type="PRO" id="PR:Q6PHH3"/>
<dbReference type="Proteomes" id="UP000000437">
    <property type="component" value="Alternate scaffold 18"/>
</dbReference>
<dbReference type="Proteomes" id="UP000000437">
    <property type="component" value="Chromosome 18"/>
</dbReference>
<dbReference type="Bgee" id="ENSDARG00000035054">
    <property type="expression patterns" value="Expressed in intestine and 28 other cell types or tissues"/>
</dbReference>
<dbReference type="GO" id="GO:0090443">
    <property type="term" value="C:FAR/SIN/STRIPAK complex"/>
    <property type="evidence" value="ECO:0000318"/>
    <property type="project" value="GO_Central"/>
</dbReference>
<dbReference type="GO" id="GO:0000139">
    <property type="term" value="C:Golgi membrane"/>
    <property type="evidence" value="ECO:0007669"/>
    <property type="project" value="UniProtKB-SubCell"/>
</dbReference>
<dbReference type="GO" id="GO:0005886">
    <property type="term" value="C:plasma membrane"/>
    <property type="evidence" value="ECO:0007669"/>
    <property type="project" value="UniProtKB-SubCell"/>
</dbReference>
<dbReference type="GO" id="GO:0019901">
    <property type="term" value="F:protein kinase binding"/>
    <property type="evidence" value="ECO:0000318"/>
    <property type="project" value="GO_Central"/>
</dbReference>
<dbReference type="GO" id="GO:0001525">
    <property type="term" value="P:angiogenesis"/>
    <property type="evidence" value="ECO:0007669"/>
    <property type="project" value="UniProtKB-KW"/>
</dbReference>
<dbReference type="GO" id="GO:0006915">
    <property type="term" value="P:apoptotic process"/>
    <property type="evidence" value="ECO:0007669"/>
    <property type="project" value="UniProtKB-KW"/>
</dbReference>
<dbReference type="GO" id="GO:0001568">
    <property type="term" value="P:blood vessel development"/>
    <property type="evidence" value="ECO:0000315"/>
    <property type="project" value="ZFIN"/>
</dbReference>
<dbReference type="GO" id="GO:0048514">
    <property type="term" value="P:blood vessel morphogenesis"/>
    <property type="evidence" value="ECO:0000316"/>
    <property type="project" value="ZFIN"/>
</dbReference>
<dbReference type="GO" id="GO:0043009">
    <property type="term" value="P:chordate embryonic development"/>
    <property type="evidence" value="ECO:0000316"/>
    <property type="project" value="ZFIN"/>
</dbReference>
<dbReference type="GO" id="GO:0090168">
    <property type="term" value="P:Golgi reassembly"/>
    <property type="evidence" value="ECO:0000318"/>
    <property type="project" value="GO_Central"/>
</dbReference>
<dbReference type="GO" id="GO:0007507">
    <property type="term" value="P:heart development"/>
    <property type="evidence" value="ECO:0000316"/>
    <property type="project" value="ZFIN"/>
</dbReference>
<dbReference type="GO" id="GO:0003007">
    <property type="term" value="P:heart morphogenesis"/>
    <property type="evidence" value="ECO:0000316"/>
    <property type="project" value="ZFIN"/>
</dbReference>
<dbReference type="GO" id="GO:0001944">
    <property type="term" value="P:vasculature development"/>
    <property type="evidence" value="ECO:0000316"/>
    <property type="project" value="ZFIN"/>
</dbReference>
<dbReference type="FunFam" id="1.10.12.70:FF:000001">
    <property type="entry name" value="Programmed cell death protein 10"/>
    <property type="match status" value="1"/>
</dbReference>
<dbReference type="FunFam" id="1.20.120.330:FF:000006">
    <property type="entry name" value="Programmed cell death protein 10"/>
    <property type="match status" value="1"/>
</dbReference>
<dbReference type="Gene3D" id="1.10.12.70">
    <property type="match status" value="1"/>
</dbReference>
<dbReference type="Gene3D" id="1.20.120.330">
    <property type="entry name" value="Nucleotidyltransferases domain 2"/>
    <property type="match status" value="1"/>
</dbReference>
<dbReference type="InterPro" id="IPR046409">
    <property type="entry name" value="PDC10_dimerisation_sf"/>
</dbReference>
<dbReference type="InterPro" id="IPR009652">
    <property type="entry name" value="PDCD10"/>
</dbReference>
<dbReference type="InterPro" id="IPR048288">
    <property type="entry name" value="PDCD10_N"/>
</dbReference>
<dbReference type="PANTHER" id="PTHR13250:SF1">
    <property type="entry name" value="PROGRAMMED CELL DEATH PROTEIN 10"/>
    <property type="match status" value="1"/>
</dbReference>
<dbReference type="PANTHER" id="PTHR13250">
    <property type="entry name" value="TF-1 CELL APOPTOSIS RELATED PROTEIN-15"/>
    <property type="match status" value="1"/>
</dbReference>
<dbReference type="Pfam" id="PF06840">
    <property type="entry name" value="PDC10_C"/>
    <property type="match status" value="1"/>
</dbReference>
<dbReference type="Pfam" id="PF20929">
    <property type="entry name" value="PDCD10_N"/>
    <property type="match status" value="1"/>
</dbReference>
<name>PD10A_DANRE</name>
<sequence length="210" mass="24380">MTMEEMKNEADATSMVSMTLYAVMYPVFNELESVNLSAAQTLRAAFKKAEKENPGLTQDIIMKILEKKNVEINFTESLLRMAADDVEEYMIDRPEREFQDLNERARALKQILSKIPDEINDRVRFLQTIKDIASAIKELLDTVNNVFKKYQYQNRRALEHQKKEFVKHSKSFSDTLKTYFKDGKAINVFASANRLIHQTNLILQTFKTVA</sequence>
<proteinExistence type="evidence at protein level"/>
<comment type="function">
    <text evidence="2 3 4">Promotes cell proliferation. Modulates apoptotic pathways. Increases mitogen-activated protein kinase activity. Important for cell migration, and for normal structure and assembly of the Golgi complex. Important for KDR/VEGFR2 signaling. Required for normal angiogenesis, vasculogenesis and hematopoiesis during embryonic development (By similarity). Required for normal cardiovascular development (PubMed:19370760). Promotes cell proliferation. Modulates apoptotic pathways. Increases mitogen-activated protein kinase activity and STK26 activity. Important for cell migration, and for normal structure and assembly of the Golgi complex. Part of the striatin-interacting phosphatase and kinase (STRIPAK) complexes. STRIPAK complexes have critical roles in protein (de)phosphorylation and are regulators of multiple signaling pathways including Hippo, MAPK, nuclear receptor and cytoskeleton remodeling. Different types of STRIPAK complexes are involved in a variety of biological processes such as cell growth, differentiation, apoptosis, metabolism and immune regulation (By similarity).</text>
</comment>
<comment type="subunit">
    <text evidence="4">Interacts (via C-terminus) with CCM2. Interacts (via N-terminus) with STK25 and STK26.</text>
</comment>
<comment type="subcellular location">
    <subcellularLocation>
        <location evidence="3">Cytoplasm</location>
    </subcellularLocation>
    <subcellularLocation>
        <location evidence="1">Golgi apparatus membrane</location>
        <topology evidence="1">Peripheral membrane protein</topology>
        <orientation evidence="1">Cytoplasmic side</orientation>
    </subcellularLocation>
    <subcellularLocation>
        <location evidence="1">Cell membrane</location>
        <topology evidence="1">Peripheral membrane protein</topology>
        <orientation evidence="1">Cytoplasmic side</orientation>
    </subcellularLocation>
</comment>
<comment type="similarity">
    <text evidence="5">Belongs to the PDCD10 family.</text>
</comment>
<comment type="sequence caution" evidence="5">
    <conflict type="erroneous initiation">
        <sequence resource="EMBL-CDS" id="AAH56552"/>
    </conflict>
    <text>Truncated N-terminus.</text>
</comment>
<gene>
    <name type="primary">pdcd10a</name>
    <name type="synonym">pdcd10</name>
    <name type="ORF">si:ch211-167c22.5</name>
</gene>
<accession>Q6PHH3</accession>
<accession>A8DZ91</accession>
<protein>
    <recommendedName>
        <fullName>Programmed cell death protein 10-A</fullName>
    </recommendedName>
</protein>
<organism>
    <name type="scientific">Danio rerio</name>
    <name type="common">Zebrafish</name>
    <name type="synonym">Brachydanio rerio</name>
    <dbReference type="NCBI Taxonomy" id="7955"/>
    <lineage>
        <taxon>Eukaryota</taxon>
        <taxon>Metazoa</taxon>
        <taxon>Chordata</taxon>
        <taxon>Craniata</taxon>
        <taxon>Vertebrata</taxon>
        <taxon>Euteleostomi</taxon>
        <taxon>Actinopterygii</taxon>
        <taxon>Neopterygii</taxon>
        <taxon>Teleostei</taxon>
        <taxon>Ostariophysi</taxon>
        <taxon>Cypriniformes</taxon>
        <taxon>Danionidae</taxon>
        <taxon>Danioninae</taxon>
        <taxon>Danio</taxon>
    </lineage>
</organism>
<evidence type="ECO:0000250" key="1">
    <source>
        <dbReference type="UniProtKB" id="Q6NX65"/>
    </source>
</evidence>
<evidence type="ECO:0000250" key="2">
    <source>
        <dbReference type="UniProtKB" id="Q8VE70"/>
    </source>
</evidence>
<evidence type="ECO:0000250" key="3">
    <source>
        <dbReference type="UniProtKB" id="Q9BUL8"/>
    </source>
</evidence>
<evidence type="ECO:0000269" key="4">
    <source>
    </source>
</evidence>
<evidence type="ECO:0000305" key="5"/>